<gene>
    <name evidence="1" type="primary">murC</name>
    <name type="ordered locus">FP2056</name>
</gene>
<evidence type="ECO:0000255" key="1">
    <source>
        <dbReference type="HAMAP-Rule" id="MF_00046"/>
    </source>
</evidence>
<feature type="chain" id="PRO_1000074740" description="UDP-N-acetylmuramate--L-alanine ligase">
    <location>
        <begin position="1"/>
        <end position="448"/>
    </location>
</feature>
<feature type="binding site" evidence="1">
    <location>
        <begin position="118"/>
        <end position="124"/>
    </location>
    <ligand>
        <name>ATP</name>
        <dbReference type="ChEBI" id="CHEBI:30616"/>
    </ligand>
</feature>
<proteinExistence type="inferred from homology"/>
<dbReference type="EC" id="6.3.2.8" evidence="1"/>
<dbReference type="EMBL" id="AM398681">
    <property type="protein sequence ID" value="CAL44118.1"/>
    <property type="molecule type" value="Genomic_DNA"/>
</dbReference>
<dbReference type="RefSeq" id="WP_011964155.1">
    <property type="nucleotide sequence ID" value="NC_009613.3"/>
</dbReference>
<dbReference type="RefSeq" id="YP_001296920.1">
    <property type="nucleotide sequence ID" value="NC_009613.3"/>
</dbReference>
<dbReference type="SMR" id="A6H194"/>
<dbReference type="STRING" id="402612.FP2056"/>
<dbReference type="EnsemblBacteria" id="CAL44118">
    <property type="protein sequence ID" value="CAL44118"/>
    <property type="gene ID" value="FP2056"/>
</dbReference>
<dbReference type="GeneID" id="66551760"/>
<dbReference type="KEGG" id="fps:FP2056"/>
<dbReference type="PATRIC" id="fig|402612.5.peg.2083"/>
<dbReference type="eggNOG" id="COG0773">
    <property type="taxonomic scope" value="Bacteria"/>
</dbReference>
<dbReference type="HOGENOM" id="CLU_028104_2_2_10"/>
<dbReference type="OrthoDB" id="9804126at2"/>
<dbReference type="UniPathway" id="UPA00219"/>
<dbReference type="Proteomes" id="UP000006394">
    <property type="component" value="Chromosome"/>
</dbReference>
<dbReference type="GO" id="GO:0005737">
    <property type="term" value="C:cytoplasm"/>
    <property type="evidence" value="ECO:0007669"/>
    <property type="project" value="UniProtKB-SubCell"/>
</dbReference>
<dbReference type="GO" id="GO:0005524">
    <property type="term" value="F:ATP binding"/>
    <property type="evidence" value="ECO:0007669"/>
    <property type="project" value="UniProtKB-UniRule"/>
</dbReference>
<dbReference type="GO" id="GO:0008763">
    <property type="term" value="F:UDP-N-acetylmuramate-L-alanine ligase activity"/>
    <property type="evidence" value="ECO:0007669"/>
    <property type="project" value="UniProtKB-UniRule"/>
</dbReference>
<dbReference type="GO" id="GO:0051301">
    <property type="term" value="P:cell division"/>
    <property type="evidence" value="ECO:0007669"/>
    <property type="project" value="UniProtKB-KW"/>
</dbReference>
<dbReference type="GO" id="GO:0071555">
    <property type="term" value="P:cell wall organization"/>
    <property type="evidence" value="ECO:0007669"/>
    <property type="project" value="UniProtKB-KW"/>
</dbReference>
<dbReference type="GO" id="GO:0009252">
    <property type="term" value="P:peptidoglycan biosynthetic process"/>
    <property type="evidence" value="ECO:0007669"/>
    <property type="project" value="UniProtKB-UniRule"/>
</dbReference>
<dbReference type="GO" id="GO:0008360">
    <property type="term" value="P:regulation of cell shape"/>
    <property type="evidence" value="ECO:0007669"/>
    <property type="project" value="UniProtKB-KW"/>
</dbReference>
<dbReference type="Gene3D" id="3.90.190.20">
    <property type="entry name" value="Mur ligase, C-terminal domain"/>
    <property type="match status" value="1"/>
</dbReference>
<dbReference type="Gene3D" id="3.40.1190.10">
    <property type="entry name" value="Mur-like, catalytic domain"/>
    <property type="match status" value="1"/>
</dbReference>
<dbReference type="Gene3D" id="3.40.50.720">
    <property type="entry name" value="NAD(P)-binding Rossmann-like Domain"/>
    <property type="match status" value="1"/>
</dbReference>
<dbReference type="HAMAP" id="MF_00046">
    <property type="entry name" value="MurC"/>
    <property type="match status" value="1"/>
</dbReference>
<dbReference type="InterPro" id="IPR036565">
    <property type="entry name" value="Mur-like_cat_sf"/>
</dbReference>
<dbReference type="InterPro" id="IPR004101">
    <property type="entry name" value="Mur_ligase_C"/>
</dbReference>
<dbReference type="InterPro" id="IPR036615">
    <property type="entry name" value="Mur_ligase_C_dom_sf"/>
</dbReference>
<dbReference type="InterPro" id="IPR013221">
    <property type="entry name" value="Mur_ligase_cen"/>
</dbReference>
<dbReference type="InterPro" id="IPR000713">
    <property type="entry name" value="Mur_ligase_N"/>
</dbReference>
<dbReference type="InterPro" id="IPR050061">
    <property type="entry name" value="MurCDEF_pg_biosynth"/>
</dbReference>
<dbReference type="InterPro" id="IPR005758">
    <property type="entry name" value="UDP-N-AcMur_Ala_ligase_MurC"/>
</dbReference>
<dbReference type="NCBIfam" id="TIGR01082">
    <property type="entry name" value="murC"/>
    <property type="match status" value="1"/>
</dbReference>
<dbReference type="PANTHER" id="PTHR43445:SF3">
    <property type="entry name" value="UDP-N-ACETYLMURAMATE--L-ALANINE LIGASE"/>
    <property type="match status" value="1"/>
</dbReference>
<dbReference type="PANTHER" id="PTHR43445">
    <property type="entry name" value="UDP-N-ACETYLMURAMATE--L-ALANINE LIGASE-RELATED"/>
    <property type="match status" value="1"/>
</dbReference>
<dbReference type="Pfam" id="PF01225">
    <property type="entry name" value="Mur_ligase"/>
    <property type="match status" value="1"/>
</dbReference>
<dbReference type="Pfam" id="PF02875">
    <property type="entry name" value="Mur_ligase_C"/>
    <property type="match status" value="1"/>
</dbReference>
<dbReference type="Pfam" id="PF08245">
    <property type="entry name" value="Mur_ligase_M"/>
    <property type="match status" value="1"/>
</dbReference>
<dbReference type="SUPFAM" id="SSF51984">
    <property type="entry name" value="MurCD N-terminal domain"/>
    <property type="match status" value="1"/>
</dbReference>
<dbReference type="SUPFAM" id="SSF53623">
    <property type="entry name" value="MurD-like peptide ligases, catalytic domain"/>
    <property type="match status" value="1"/>
</dbReference>
<dbReference type="SUPFAM" id="SSF53244">
    <property type="entry name" value="MurD-like peptide ligases, peptide-binding domain"/>
    <property type="match status" value="1"/>
</dbReference>
<comment type="function">
    <text evidence="1">Cell wall formation.</text>
</comment>
<comment type="catalytic activity">
    <reaction evidence="1">
        <text>UDP-N-acetyl-alpha-D-muramate + L-alanine + ATP = UDP-N-acetyl-alpha-D-muramoyl-L-alanine + ADP + phosphate + H(+)</text>
        <dbReference type="Rhea" id="RHEA:23372"/>
        <dbReference type="ChEBI" id="CHEBI:15378"/>
        <dbReference type="ChEBI" id="CHEBI:30616"/>
        <dbReference type="ChEBI" id="CHEBI:43474"/>
        <dbReference type="ChEBI" id="CHEBI:57972"/>
        <dbReference type="ChEBI" id="CHEBI:70757"/>
        <dbReference type="ChEBI" id="CHEBI:83898"/>
        <dbReference type="ChEBI" id="CHEBI:456216"/>
        <dbReference type="EC" id="6.3.2.8"/>
    </reaction>
</comment>
<comment type="pathway">
    <text evidence="1">Cell wall biogenesis; peptidoglycan biosynthesis.</text>
</comment>
<comment type="subcellular location">
    <subcellularLocation>
        <location evidence="1">Cytoplasm</location>
    </subcellularLocation>
</comment>
<comment type="similarity">
    <text evidence="1">Belongs to the MurCDEF family.</text>
</comment>
<name>MURC_FLAPJ</name>
<reference key="1">
    <citation type="journal article" date="2007" name="Nat. Biotechnol.">
        <title>Complete genome sequence of the fish pathogen Flavobacterium psychrophilum.</title>
        <authorList>
            <person name="Duchaud E."/>
            <person name="Boussaha M."/>
            <person name="Loux V."/>
            <person name="Bernardet J.-F."/>
            <person name="Michel C."/>
            <person name="Kerouault B."/>
            <person name="Mondot S."/>
            <person name="Nicolas P."/>
            <person name="Bossy R."/>
            <person name="Caron C."/>
            <person name="Bessieres P."/>
            <person name="Gibrat J.-F."/>
            <person name="Claverol S."/>
            <person name="Dumetz F."/>
            <person name="Le Henaff M."/>
            <person name="Benmansour A."/>
        </authorList>
    </citation>
    <scope>NUCLEOTIDE SEQUENCE [LARGE SCALE GENOMIC DNA]</scope>
    <source>
        <strain>ATCC 49511 / DSM 21280 / CIP 103535 / JIP02/86</strain>
    </source>
</reference>
<accession>A6H194</accession>
<sequence length="448" mass="49969">MNLNQIHNVYFIGIGGIGMSALARYFKFIGKNVSGYDKTPSILTSELIESGIAIHFEDNIDLIPKDYFVENTLVIITPAVPKSHSEWNYFLEREYHVKKRAEVLGIITKDTFCLAVAGTHGKTTTSSILGHILYESGADVTAFIGGIVENYNSNLIGSGKTVTVVEADEFDRSFLHLYPNIACVTSMDADHLDIYGDDAAIKASFKEFADKVEDKNKLFVINGLPLKGITVGANDDSQFVAHNIRIENGWYIFDVKTPTENIKDLKFGLPGKHNLTNALLALAMARTFGTPTESIAKALASFKGVKRRFSFQIRKPKFVYIDDYAHHPTEINAVHQAVRELYPNEKVLAVFQPHLFSRTKDFANDFAKSLSQFDEILLLDIYPARELPIEGINSGWLLDKVENKNKKLVHKNELIPLLKKSDATVIVTIGAGDIGEMVVNIKKELDEK</sequence>
<protein>
    <recommendedName>
        <fullName evidence="1">UDP-N-acetylmuramate--L-alanine ligase</fullName>
        <ecNumber evidence="1">6.3.2.8</ecNumber>
    </recommendedName>
    <alternativeName>
        <fullName evidence="1">UDP-N-acetylmuramoyl-L-alanine synthetase</fullName>
    </alternativeName>
</protein>
<keyword id="KW-0067">ATP-binding</keyword>
<keyword id="KW-0131">Cell cycle</keyword>
<keyword id="KW-0132">Cell division</keyword>
<keyword id="KW-0133">Cell shape</keyword>
<keyword id="KW-0961">Cell wall biogenesis/degradation</keyword>
<keyword id="KW-0963">Cytoplasm</keyword>
<keyword id="KW-0436">Ligase</keyword>
<keyword id="KW-0547">Nucleotide-binding</keyword>
<keyword id="KW-0573">Peptidoglycan synthesis</keyword>
<keyword id="KW-1185">Reference proteome</keyword>
<organism>
    <name type="scientific">Flavobacterium psychrophilum (strain ATCC 49511 / DSM 21280 / CIP 103535 / JIP02/86)</name>
    <dbReference type="NCBI Taxonomy" id="402612"/>
    <lineage>
        <taxon>Bacteria</taxon>
        <taxon>Pseudomonadati</taxon>
        <taxon>Bacteroidota</taxon>
        <taxon>Flavobacteriia</taxon>
        <taxon>Flavobacteriales</taxon>
        <taxon>Flavobacteriaceae</taxon>
        <taxon>Flavobacterium</taxon>
    </lineage>
</organism>